<keyword id="KW-0665">Pyrimidine biosynthesis</keyword>
<keyword id="KW-1185">Reference proteome</keyword>
<keyword id="KW-0808">Transferase</keyword>
<sequence>MNHQTQTLSLEHFVSLEELSNQEVMSLIKRSIEVKENPSNIGFDKDYYVSNLFFENSTRTHKSFEMAELKLGLKTIEFNADTSSVNKGETLYDTILTMSALGLDVCVIRHPDIDYYKELIASPNIHSAIVNGGDGSGQHPSQSLLDLVTIYEEFGYFKGLKIAIVGDLTHSRVAKSNMQVLKRLGAEIFFSGPKEWYSSQFDEYGQYLPIDQLVDQIDVLMLLRVQHERHDGKGVFSKESYHQQFGLTKERYKHLRDTAIIMHPAPVNRDVEIASDLVEADKARIVKQMSNGVYARIAILEAVLNSR</sequence>
<gene>
    <name evidence="1" type="primary">pyrB</name>
    <name type="ordered locus">SAG1044</name>
</gene>
<proteinExistence type="inferred from homology"/>
<evidence type="ECO:0000255" key="1">
    <source>
        <dbReference type="HAMAP-Rule" id="MF_00001"/>
    </source>
</evidence>
<protein>
    <recommendedName>
        <fullName evidence="1">Aspartate carbamoyltransferase catalytic subunit</fullName>
        <ecNumber evidence="1">2.1.3.2</ecNumber>
    </recommendedName>
    <alternativeName>
        <fullName evidence="1">Aspartate transcarbamylase</fullName>
        <shortName evidence="1">ATCase</shortName>
    </alternativeName>
</protein>
<accession>Q8DZQ5</accession>
<organism>
    <name type="scientific">Streptococcus agalactiae serotype V (strain ATCC BAA-611 / 2603 V/R)</name>
    <dbReference type="NCBI Taxonomy" id="208435"/>
    <lineage>
        <taxon>Bacteria</taxon>
        <taxon>Bacillati</taxon>
        <taxon>Bacillota</taxon>
        <taxon>Bacilli</taxon>
        <taxon>Lactobacillales</taxon>
        <taxon>Streptococcaceae</taxon>
        <taxon>Streptococcus</taxon>
    </lineage>
</organism>
<dbReference type="EC" id="2.1.3.2" evidence="1"/>
<dbReference type="EMBL" id="AE009948">
    <property type="protein sequence ID" value="AAM99926.1"/>
    <property type="molecule type" value="Genomic_DNA"/>
</dbReference>
<dbReference type="RefSeq" id="NP_688054.1">
    <property type="nucleotide sequence ID" value="NC_004116.1"/>
</dbReference>
<dbReference type="RefSeq" id="WP_001016473.1">
    <property type="nucleotide sequence ID" value="NC_004116.1"/>
</dbReference>
<dbReference type="SMR" id="Q8DZQ5"/>
<dbReference type="STRING" id="208435.SAG1044"/>
<dbReference type="KEGG" id="sag:SAG1044"/>
<dbReference type="PATRIC" id="fig|208435.3.peg.1055"/>
<dbReference type="HOGENOM" id="CLU_043846_2_1_9"/>
<dbReference type="OrthoDB" id="9774690at2"/>
<dbReference type="UniPathway" id="UPA00070">
    <property type="reaction ID" value="UER00116"/>
</dbReference>
<dbReference type="Proteomes" id="UP000000821">
    <property type="component" value="Chromosome"/>
</dbReference>
<dbReference type="GO" id="GO:0005829">
    <property type="term" value="C:cytosol"/>
    <property type="evidence" value="ECO:0007669"/>
    <property type="project" value="TreeGrafter"/>
</dbReference>
<dbReference type="GO" id="GO:0016597">
    <property type="term" value="F:amino acid binding"/>
    <property type="evidence" value="ECO:0007669"/>
    <property type="project" value="InterPro"/>
</dbReference>
<dbReference type="GO" id="GO:0004070">
    <property type="term" value="F:aspartate carbamoyltransferase activity"/>
    <property type="evidence" value="ECO:0007669"/>
    <property type="project" value="UniProtKB-UniRule"/>
</dbReference>
<dbReference type="GO" id="GO:0006207">
    <property type="term" value="P:'de novo' pyrimidine nucleobase biosynthetic process"/>
    <property type="evidence" value="ECO:0007669"/>
    <property type="project" value="InterPro"/>
</dbReference>
<dbReference type="GO" id="GO:0044205">
    <property type="term" value="P:'de novo' UMP biosynthetic process"/>
    <property type="evidence" value="ECO:0007669"/>
    <property type="project" value="UniProtKB-UniRule"/>
</dbReference>
<dbReference type="GO" id="GO:0006520">
    <property type="term" value="P:amino acid metabolic process"/>
    <property type="evidence" value="ECO:0007669"/>
    <property type="project" value="InterPro"/>
</dbReference>
<dbReference type="FunFam" id="3.40.50.1370:FF:000011">
    <property type="entry name" value="Aspartate carbamoyltransferase"/>
    <property type="match status" value="1"/>
</dbReference>
<dbReference type="Gene3D" id="3.40.50.1370">
    <property type="entry name" value="Aspartate/ornithine carbamoyltransferase"/>
    <property type="match status" value="2"/>
</dbReference>
<dbReference type="HAMAP" id="MF_00001">
    <property type="entry name" value="Asp_carb_tr"/>
    <property type="match status" value="1"/>
</dbReference>
<dbReference type="InterPro" id="IPR006132">
    <property type="entry name" value="Asp/Orn_carbamoyltranf_P-bd"/>
</dbReference>
<dbReference type="InterPro" id="IPR006130">
    <property type="entry name" value="Asp/Orn_carbamoylTrfase"/>
</dbReference>
<dbReference type="InterPro" id="IPR036901">
    <property type="entry name" value="Asp/Orn_carbamoylTrfase_sf"/>
</dbReference>
<dbReference type="InterPro" id="IPR002082">
    <property type="entry name" value="Asp_carbamoyltransf"/>
</dbReference>
<dbReference type="InterPro" id="IPR006131">
    <property type="entry name" value="Asp_carbamoyltransf_Asp/Orn-bd"/>
</dbReference>
<dbReference type="NCBIfam" id="TIGR00670">
    <property type="entry name" value="asp_carb_tr"/>
    <property type="match status" value="1"/>
</dbReference>
<dbReference type="NCBIfam" id="NF002032">
    <property type="entry name" value="PRK00856.1"/>
    <property type="match status" value="1"/>
</dbReference>
<dbReference type="PANTHER" id="PTHR45753:SF6">
    <property type="entry name" value="ASPARTATE CARBAMOYLTRANSFERASE"/>
    <property type="match status" value="1"/>
</dbReference>
<dbReference type="PANTHER" id="PTHR45753">
    <property type="entry name" value="ORNITHINE CARBAMOYLTRANSFERASE, MITOCHONDRIAL"/>
    <property type="match status" value="1"/>
</dbReference>
<dbReference type="Pfam" id="PF00185">
    <property type="entry name" value="OTCace"/>
    <property type="match status" value="1"/>
</dbReference>
<dbReference type="Pfam" id="PF02729">
    <property type="entry name" value="OTCace_N"/>
    <property type="match status" value="1"/>
</dbReference>
<dbReference type="PRINTS" id="PR00100">
    <property type="entry name" value="AOTCASE"/>
</dbReference>
<dbReference type="PRINTS" id="PR00101">
    <property type="entry name" value="ATCASE"/>
</dbReference>
<dbReference type="SUPFAM" id="SSF53671">
    <property type="entry name" value="Aspartate/ornithine carbamoyltransferase"/>
    <property type="match status" value="1"/>
</dbReference>
<dbReference type="PROSITE" id="PS00097">
    <property type="entry name" value="CARBAMOYLTRANSFERASE"/>
    <property type="match status" value="1"/>
</dbReference>
<name>PYRB_STRA5</name>
<reference key="1">
    <citation type="journal article" date="2002" name="Proc. Natl. Acad. Sci. U.S.A.">
        <title>Complete genome sequence and comparative genomic analysis of an emerging human pathogen, serotype V Streptococcus agalactiae.</title>
        <authorList>
            <person name="Tettelin H."/>
            <person name="Masignani V."/>
            <person name="Cieslewicz M.J."/>
            <person name="Eisen J.A."/>
            <person name="Peterson S.N."/>
            <person name="Wessels M.R."/>
            <person name="Paulsen I.T."/>
            <person name="Nelson K.E."/>
            <person name="Margarit I."/>
            <person name="Read T.D."/>
            <person name="Madoff L.C."/>
            <person name="Wolf A.M."/>
            <person name="Beanan M.J."/>
            <person name="Brinkac L.M."/>
            <person name="Daugherty S.C."/>
            <person name="DeBoy R.T."/>
            <person name="Durkin A.S."/>
            <person name="Kolonay J.F."/>
            <person name="Madupu R."/>
            <person name="Lewis M.R."/>
            <person name="Radune D."/>
            <person name="Fedorova N.B."/>
            <person name="Scanlan D."/>
            <person name="Khouri H.M."/>
            <person name="Mulligan S."/>
            <person name="Carty H.A."/>
            <person name="Cline R.T."/>
            <person name="Van Aken S.E."/>
            <person name="Gill J."/>
            <person name="Scarselli M."/>
            <person name="Mora M."/>
            <person name="Iacobini E.T."/>
            <person name="Brettoni C."/>
            <person name="Galli G."/>
            <person name="Mariani M."/>
            <person name="Vegni F."/>
            <person name="Maione D."/>
            <person name="Rinaudo D."/>
            <person name="Rappuoli R."/>
            <person name="Telford J.L."/>
            <person name="Kasper D.L."/>
            <person name="Grandi G."/>
            <person name="Fraser C.M."/>
        </authorList>
    </citation>
    <scope>NUCLEOTIDE SEQUENCE [LARGE SCALE GENOMIC DNA]</scope>
    <source>
        <strain>ATCC BAA-611 / 2603 V/R</strain>
    </source>
</reference>
<comment type="function">
    <text evidence="1">Catalyzes the condensation of carbamoyl phosphate and aspartate to form carbamoyl aspartate and inorganic phosphate, the committed step in the de novo pyrimidine nucleotide biosynthesis pathway.</text>
</comment>
<comment type="catalytic activity">
    <reaction evidence="1">
        <text>carbamoyl phosphate + L-aspartate = N-carbamoyl-L-aspartate + phosphate + H(+)</text>
        <dbReference type="Rhea" id="RHEA:20013"/>
        <dbReference type="ChEBI" id="CHEBI:15378"/>
        <dbReference type="ChEBI" id="CHEBI:29991"/>
        <dbReference type="ChEBI" id="CHEBI:32814"/>
        <dbReference type="ChEBI" id="CHEBI:43474"/>
        <dbReference type="ChEBI" id="CHEBI:58228"/>
        <dbReference type="EC" id="2.1.3.2"/>
    </reaction>
</comment>
<comment type="pathway">
    <text evidence="1">Pyrimidine metabolism; UMP biosynthesis via de novo pathway; (S)-dihydroorotate from bicarbonate: step 2/3.</text>
</comment>
<comment type="subunit">
    <text evidence="1">Heterododecamer (2C3:3R2) of six catalytic PyrB chains organized as two trimers (C3), and six regulatory PyrI chains organized as three dimers (R2).</text>
</comment>
<comment type="similarity">
    <text evidence="1">Belongs to the aspartate/ornithine carbamoyltransferase superfamily. ATCase family.</text>
</comment>
<feature type="chain" id="PRO_0000113202" description="Aspartate carbamoyltransferase catalytic subunit">
    <location>
        <begin position="1"/>
        <end position="307"/>
    </location>
</feature>
<feature type="binding site" evidence="1">
    <location>
        <position position="59"/>
    </location>
    <ligand>
        <name>carbamoyl phosphate</name>
        <dbReference type="ChEBI" id="CHEBI:58228"/>
    </ligand>
</feature>
<feature type="binding site" evidence="1">
    <location>
        <position position="60"/>
    </location>
    <ligand>
        <name>carbamoyl phosphate</name>
        <dbReference type="ChEBI" id="CHEBI:58228"/>
    </ligand>
</feature>
<feature type="binding site" evidence="1">
    <location>
        <position position="87"/>
    </location>
    <ligand>
        <name>L-aspartate</name>
        <dbReference type="ChEBI" id="CHEBI:29991"/>
    </ligand>
</feature>
<feature type="binding site" evidence="1">
    <location>
        <position position="109"/>
    </location>
    <ligand>
        <name>carbamoyl phosphate</name>
        <dbReference type="ChEBI" id="CHEBI:58228"/>
    </ligand>
</feature>
<feature type="binding site" evidence="1">
    <location>
        <position position="139"/>
    </location>
    <ligand>
        <name>carbamoyl phosphate</name>
        <dbReference type="ChEBI" id="CHEBI:58228"/>
    </ligand>
</feature>
<feature type="binding site" evidence="1">
    <location>
        <position position="142"/>
    </location>
    <ligand>
        <name>carbamoyl phosphate</name>
        <dbReference type="ChEBI" id="CHEBI:58228"/>
    </ligand>
</feature>
<feature type="binding site" evidence="1">
    <location>
        <position position="172"/>
    </location>
    <ligand>
        <name>L-aspartate</name>
        <dbReference type="ChEBI" id="CHEBI:29991"/>
    </ligand>
</feature>
<feature type="binding site" evidence="1">
    <location>
        <position position="224"/>
    </location>
    <ligand>
        <name>L-aspartate</name>
        <dbReference type="ChEBI" id="CHEBI:29991"/>
    </ligand>
</feature>
<feature type="binding site" evidence="1">
    <location>
        <position position="265"/>
    </location>
    <ligand>
        <name>carbamoyl phosphate</name>
        <dbReference type="ChEBI" id="CHEBI:58228"/>
    </ligand>
</feature>
<feature type="binding site" evidence="1">
    <location>
        <position position="266"/>
    </location>
    <ligand>
        <name>carbamoyl phosphate</name>
        <dbReference type="ChEBI" id="CHEBI:58228"/>
    </ligand>
</feature>